<gene>
    <name type="primary">mepA</name>
</gene>
<proteinExistence type="evidence at protein level"/>
<evidence type="ECO:0000255" key="1"/>
<evidence type="ECO:0000255" key="2">
    <source>
        <dbReference type="PROSITE-ProRule" id="PRU00303"/>
    </source>
</evidence>
<evidence type="ECO:0000256" key="3">
    <source>
        <dbReference type="SAM" id="MobiDB-lite"/>
    </source>
</evidence>
<evidence type="ECO:0000305" key="4"/>
<protein>
    <recommendedName>
        <fullName>Multidrug/solvent efflux pump periplasmic linker protein MepA</fullName>
    </recommendedName>
</protein>
<sequence length="384" mass="41250">MQFKPAVTALVSAVALATLLSGCKKEEAAPAAQAPQVGVVTIQPQAFTLTSELPGRTSAYRVAEVRPQVNGIILKRLFKEGSEVKEGQQLYQIDPAVYEATLANAKANLLATRSLAERYKQLIDEQAVSKQEYDDANAKRLQAEASLKSAQIDLRYTKVLAPISGRIGRSSFTEGALVSNGQTDAMATIQQLDPIYVDVTQSTAELLKLRRDLESGQLQKAGDNAASVQLVLEDGSLFKQEGRLEFSEVAVDETTGSVTLRALFPNPDHTLLPGMFVHARLKAGVNANAILAPQQGVTRDLKGAPTALVVNQENKVELRQLKASRTLGSDWLIEEGLNPGDRLITEGLQYVRPGVEVKVSDATNVKKPAGPDQANAAKADAKAE</sequence>
<organism>
    <name type="scientific">Pseudomonas putida</name>
    <name type="common">Arthrobacter siderocapsulatus</name>
    <dbReference type="NCBI Taxonomy" id="303"/>
    <lineage>
        <taxon>Bacteria</taxon>
        <taxon>Pseudomonadati</taxon>
        <taxon>Pseudomonadota</taxon>
        <taxon>Gammaproteobacteria</taxon>
        <taxon>Pseudomonadales</taxon>
        <taxon>Pseudomonadaceae</taxon>
        <taxon>Pseudomonas</taxon>
    </lineage>
</organism>
<name>MEPA_PSEPU</name>
<accession>P0C069</accession>
<reference key="1">
    <citation type="journal article" date="1998" name="Extremophiles">
        <title>Isolation and transposon mutagenesis of a Pseudomonas putida KT2442 toluene-resistant variant: involvement of an efflux system in solvent resistance.</title>
        <authorList>
            <person name="Fukumori F."/>
            <person name="Hirayama H."/>
            <person name="Takami H."/>
            <person name="Inoue A."/>
            <person name="Horikoshi K."/>
        </authorList>
    </citation>
    <scope>NUCLEOTIDE SEQUENCE [GENOMIC DNA]</scope>
    <scope>CHARACTERIZATION</scope>
    <source>
        <strain>KT2442-TOL</strain>
    </source>
</reference>
<comment type="function">
    <text>The periplasmic linker protein component of an organic solvent and antibiotic efflux pump; confers resistance to toluene, hexane, p-xylene, ampicillin, penicillin G, erythromycin, novobiocin and tetracycline.</text>
</comment>
<comment type="subcellular location">
    <subcellularLocation>
        <location evidence="4">Cell inner membrane</location>
        <topology evidence="2">Lipid-anchor</topology>
    </subcellularLocation>
</comment>
<comment type="similarity">
    <text evidence="4">Belongs to the membrane fusion protein (MFP) (TC 8.A.1) family.</text>
</comment>
<comment type="caution">
    <text evidence="4">There are 4 nearly identical operons in various strains of P.putida. This one and the ttgABC operon of strain DOT-T1E function in solvent and antibiotic efflux; however in strain S12 the arpABC operon functions only in antibiotic efflux. This may be due to different protein expression levels. In strain KT2440 the equivalent operon does not seem to function in toluene efflux.</text>
</comment>
<keyword id="KW-0046">Antibiotic resistance</keyword>
<keyword id="KW-0997">Cell inner membrane</keyword>
<keyword id="KW-1003">Cell membrane</keyword>
<keyword id="KW-0175">Coiled coil</keyword>
<keyword id="KW-0449">Lipoprotein</keyword>
<keyword id="KW-0472">Membrane</keyword>
<keyword id="KW-0564">Palmitate</keyword>
<keyword id="KW-0732">Signal</keyword>
<keyword id="KW-0813">Transport</keyword>
<feature type="signal peptide" evidence="2">
    <location>
        <begin position="1"/>
        <end position="22"/>
    </location>
</feature>
<feature type="chain" id="PRO_0000018711" description="Multidrug/solvent efflux pump periplasmic linker protein MepA">
    <location>
        <begin position="23"/>
        <end position="384"/>
    </location>
</feature>
<feature type="region of interest" description="Disordered" evidence="3">
    <location>
        <begin position="362"/>
        <end position="384"/>
    </location>
</feature>
<feature type="coiled-coil region" evidence="1">
    <location>
        <begin position="115"/>
        <end position="155"/>
    </location>
</feature>
<feature type="compositionally biased region" description="Low complexity" evidence="3">
    <location>
        <begin position="368"/>
        <end position="378"/>
    </location>
</feature>
<feature type="lipid moiety-binding region" description="N-palmitoyl cysteine" evidence="2">
    <location>
        <position position="23"/>
    </location>
</feature>
<feature type="lipid moiety-binding region" description="S-diacylglycerol cysteine" evidence="2">
    <location>
        <position position="23"/>
    </location>
</feature>
<dbReference type="SMR" id="P0C069"/>
<dbReference type="PATRIC" id="fig|303.175.peg.5271"/>
<dbReference type="eggNOG" id="COG0845">
    <property type="taxonomic scope" value="Bacteria"/>
</dbReference>
<dbReference type="GO" id="GO:0005886">
    <property type="term" value="C:plasma membrane"/>
    <property type="evidence" value="ECO:0007669"/>
    <property type="project" value="UniProtKB-SubCell"/>
</dbReference>
<dbReference type="GO" id="GO:0022857">
    <property type="term" value="F:transmembrane transporter activity"/>
    <property type="evidence" value="ECO:0007669"/>
    <property type="project" value="InterPro"/>
</dbReference>
<dbReference type="GO" id="GO:0046677">
    <property type="term" value="P:response to antibiotic"/>
    <property type="evidence" value="ECO:0007669"/>
    <property type="project" value="UniProtKB-KW"/>
</dbReference>
<dbReference type="FunFam" id="2.40.420.20:FF:000001">
    <property type="entry name" value="Efflux RND transporter periplasmic adaptor subunit"/>
    <property type="match status" value="1"/>
</dbReference>
<dbReference type="FunFam" id="2.40.30.170:FF:000001">
    <property type="entry name" value="Multidrug resistance efflux transporter MdtE"/>
    <property type="match status" value="1"/>
</dbReference>
<dbReference type="Gene3D" id="2.40.30.170">
    <property type="match status" value="1"/>
</dbReference>
<dbReference type="Gene3D" id="2.40.420.20">
    <property type="match status" value="1"/>
</dbReference>
<dbReference type="Gene3D" id="2.40.50.100">
    <property type="match status" value="1"/>
</dbReference>
<dbReference type="Gene3D" id="1.10.287.470">
    <property type="entry name" value="Helix hairpin bin"/>
    <property type="match status" value="1"/>
</dbReference>
<dbReference type="InterPro" id="IPR043602">
    <property type="entry name" value="CusB-like_dom_1"/>
</dbReference>
<dbReference type="InterPro" id="IPR032317">
    <property type="entry name" value="CusB_D23"/>
</dbReference>
<dbReference type="InterPro" id="IPR051160">
    <property type="entry name" value="MFP_Efflux"/>
</dbReference>
<dbReference type="InterPro" id="IPR006143">
    <property type="entry name" value="RND_pump_MFP"/>
</dbReference>
<dbReference type="NCBIfam" id="TIGR01730">
    <property type="entry name" value="RND_mfp"/>
    <property type="match status" value="1"/>
</dbReference>
<dbReference type="PANTHER" id="PTHR30158">
    <property type="entry name" value="ACRA/E-RELATED COMPONENT OF DRUG EFFLUX TRANSPORTER"/>
    <property type="match status" value="1"/>
</dbReference>
<dbReference type="PANTHER" id="PTHR30158:SF3">
    <property type="entry name" value="MULTIDRUG EFFLUX PUMP SUBUNIT ACRA-RELATED"/>
    <property type="match status" value="1"/>
</dbReference>
<dbReference type="Pfam" id="PF00529">
    <property type="entry name" value="CusB_dom_1"/>
    <property type="match status" value="1"/>
</dbReference>
<dbReference type="Pfam" id="PF16576">
    <property type="entry name" value="HlyD_D23"/>
    <property type="match status" value="1"/>
</dbReference>
<dbReference type="SUPFAM" id="SSF111369">
    <property type="entry name" value="HlyD-like secretion proteins"/>
    <property type="match status" value="1"/>
</dbReference>
<dbReference type="PROSITE" id="PS51257">
    <property type="entry name" value="PROKAR_LIPOPROTEIN"/>
    <property type="match status" value="1"/>
</dbReference>